<evidence type="ECO:0000255" key="1"/>
<evidence type="ECO:0000256" key="2">
    <source>
        <dbReference type="SAM" id="MobiDB-lite"/>
    </source>
</evidence>
<evidence type="ECO:0000305" key="3"/>
<reference key="1">
    <citation type="journal article" date="1998" name="Science">
        <title>Genome sequence of the nematode C. elegans: a platform for investigating biology.</title>
        <authorList>
            <consortium name="The C. elegans sequencing consortium"/>
        </authorList>
    </citation>
    <scope>NUCLEOTIDE SEQUENCE [LARGE SCALE GENOMIC DNA]</scope>
    <source>
        <strain>Bristol N2</strain>
    </source>
</reference>
<protein>
    <recommendedName>
        <fullName>Uncharacterized protein T09B9.5</fullName>
    </recommendedName>
</protein>
<comment type="subcellular location">
    <subcellularLocation>
        <location evidence="3">Membrane</location>
        <topology evidence="3">Multi-pass membrane protein</topology>
    </subcellularLocation>
</comment>
<proteinExistence type="predicted"/>
<dbReference type="EMBL" id="Z47070">
    <property type="protein sequence ID" value="CAA87342.1"/>
    <property type="molecule type" value="Genomic_DNA"/>
</dbReference>
<dbReference type="PIR" id="T24731">
    <property type="entry name" value="T24731"/>
</dbReference>
<dbReference type="RefSeq" id="NP_509641.1">
    <property type="nucleotide sequence ID" value="NM_077240.4"/>
</dbReference>
<dbReference type="SMR" id="Q09351"/>
<dbReference type="FunCoup" id="Q09351">
    <property type="interactions" value="387"/>
</dbReference>
<dbReference type="PaxDb" id="6239-T09B9.5"/>
<dbReference type="EnsemblMetazoa" id="T09B9.5.1">
    <property type="protein sequence ID" value="T09B9.5.1"/>
    <property type="gene ID" value="WBGene00011646"/>
</dbReference>
<dbReference type="GeneID" id="188322"/>
<dbReference type="KEGG" id="cel:CELE_T09B9.5"/>
<dbReference type="UCSC" id="T09B9.5">
    <property type="organism name" value="c. elegans"/>
</dbReference>
<dbReference type="AGR" id="WB:WBGene00011646"/>
<dbReference type="CTD" id="188322"/>
<dbReference type="WormBase" id="T09B9.5">
    <property type="protein sequence ID" value="CE01653"/>
    <property type="gene ID" value="WBGene00011646"/>
</dbReference>
<dbReference type="eggNOG" id="ENOG502T100">
    <property type="taxonomic scope" value="Eukaryota"/>
</dbReference>
<dbReference type="HOGENOM" id="CLU_840021_0_0_1"/>
<dbReference type="InParanoid" id="Q09351"/>
<dbReference type="OMA" id="PLIFCYI"/>
<dbReference type="OrthoDB" id="5801935at2759"/>
<dbReference type="PRO" id="PR:Q09351"/>
<dbReference type="Proteomes" id="UP000001940">
    <property type="component" value="Chromosome X"/>
</dbReference>
<dbReference type="Bgee" id="WBGene00011646">
    <property type="expression patterns" value="Expressed in larva"/>
</dbReference>
<dbReference type="GO" id="GO:0016020">
    <property type="term" value="C:membrane"/>
    <property type="evidence" value="ECO:0007669"/>
    <property type="project" value="UniProtKB-SubCell"/>
</dbReference>
<name>YRU5_CAEEL</name>
<keyword id="KW-0472">Membrane</keyword>
<keyword id="KW-1185">Reference proteome</keyword>
<keyword id="KW-0812">Transmembrane</keyword>
<keyword id="KW-1133">Transmembrane helix</keyword>
<sequence length="363" mass="40965">MLTTPNPDLCVEPFIEPSQWFFTLVEMILAVGGLIMNTNITVICHKASPMPHPQRRLLASISINFAILSGFQLARNFFLFLVMQQPCLNQVTTVSCKLQQFPLIFCYIHCAASFFLLGVQSNFLKLKPIDKSPMKWYLSCSVWQSTIAAVCVALSLLFTAFDQDLENEPMNKCSILLAVSQSYLTFSLLTLLILLHATGLIFIMLASVLQRDKKSWISFTIFSLKEIFKYETLAWQISLFISGCVVLYRHVLRESCDECAVIVLELAFLIVPLLISFMHPLYLIWYVLPMRDAATRTFPCMLSALPEYSLVPPQVPSASTSATFAIQSPRADLTPNDTLHMESKKKPLSQSPRVVIEEEDVAE</sequence>
<organism>
    <name type="scientific">Caenorhabditis elegans</name>
    <dbReference type="NCBI Taxonomy" id="6239"/>
    <lineage>
        <taxon>Eukaryota</taxon>
        <taxon>Metazoa</taxon>
        <taxon>Ecdysozoa</taxon>
        <taxon>Nematoda</taxon>
        <taxon>Chromadorea</taxon>
        <taxon>Rhabditida</taxon>
        <taxon>Rhabditina</taxon>
        <taxon>Rhabditomorpha</taxon>
        <taxon>Rhabditoidea</taxon>
        <taxon>Rhabditidae</taxon>
        <taxon>Peloderinae</taxon>
        <taxon>Caenorhabditis</taxon>
    </lineage>
</organism>
<feature type="chain" id="PRO_0000065459" description="Uncharacterized protein T09B9.5">
    <location>
        <begin position="1"/>
        <end position="363"/>
    </location>
</feature>
<feature type="transmembrane region" description="Helical" evidence="1">
    <location>
        <begin position="20"/>
        <end position="40"/>
    </location>
</feature>
<feature type="transmembrane region" description="Helical" evidence="1">
    <location>
        <begin position="63"/>
        <end position="83"/>
    </location>
</feature>
<feature type="transmembrane region" description="Helical" evidence="1">
    <location>
        <begin position="101"/>
        <end position="121"/>
    </location>
</feature>
<feature type="transmembrane region" description="Helical" evidence="1">
    <location>
        <begin position="141"/>
        <end position="161"/>
    </location>
</feature>
<feature type="transmembrane region" description="Helical" evidence="1">
    <location>
        <begin position="186"/>
        <end position="206"/>
    </location>
</feature>
<feature type="transmembrane region" description="Helical" evidence="1">
    <location>
        <begin position="227"/>
        <end position="247"/>
    </location>
</feature>
<feature type="transmembrane region" description="Helical" evidence="1">
    <location>
        <begin position="268"/>
        <end position="288"/>
    </location>
</feature>
<feature type="region of interest" description="Disordered" evidence="2">
    <location>
        <begin position="329"/>
        <end position="363"/>
    </location>
</feature>
<accession>Q09351</accession>
<gene>
    <name type="ORF">T09B9.5</name>
</gene>